<organism>
    <name type="scientific">Methylibium petroleiphilum (strain ATCC BAA-1232 / LMG 22953 / PM1)</name>
    <dbReference type="NCBI Taxonomy" id="420662"/>
    <lineage>
        <taxon>Bacteria</taxon>
        <taxon>Pseudomonadati</taxon>
        <taxon>Pseudomonadota</taxon>
        <taxon>Betaproteobacteria</taxon>
        <taxon>Burkholderiales</taxon>
        <taxon>Sphaerotilaceae</taxon>
        <taxon>Methylibium</taxon>
    </lineage>
</organism>
<feature type="chain" id="PRO_1000076397" description="Tryptophan synthase beta chain">
    <location>
        <begin position="1"/>
        <end position="412"/>
    </location>
</feature>
<feature type="modified residue" description="N6-(pyridoxal phosphate)lysine" evidence="1">
    <location>
        <position position="92"/>
    </location>
</feature>
<comment type="function">
    <text evidence="1">The beta subunit is responsible for the synthesis of L-tryptophan from indole and L-serine.</text>
</comment>
<comment type="catalytic activity">
    <reaction evidence="1">
        <text>(1S,2R)-1-C-(indol-3-yl)glycerol 3-phosphate + L-serine = D-glyceraldehyde 3-phosphate + L-tryptophan + H2O</text>
        <dbReference type="Rhea" id="RHEA:10532"/>
        <dbReference type="ChEBI" id="CHEBI:15377"/>
        <dbReference type="ChEBI" id="CHEBI:33384"/>
        <dbReference type="ChEBI" id="CHEBI:57912"/>
        <dbReference type="ChEBI" id="CHEBI:58866"/>
        <dbReference type="ChEBI" id="CHEBI:59776"/>
        <dbReference type="EC" id="4.2.1.20"/>
    </reaction>
</comment>
<comment type="cofactor">
    <cofactor evidence="1">
        <name>pyridoxal 5'-phosphate</name>
        <dbReference type="ChEBI" id="CHEBI:597326"/>
    </cofactor>
</comment>
<comment type="pathway">
    <text evidence="1">Amino-acid biosynthesis; L-tryptophan biosynthesis; L-tryptophan from chorismate: step 5/5.</text>
</comment>
<comment type="subunit">
    <text evidence="1">Tetramer of two alpha and two beta chains.</text>
</comment>
<comment type="similarity">
    <text evidence="1">Belongs to the TrpB family.</text>
</comment>
<name>TRPB_METPP</name>
<keyword id="KW-0028">Amino-acid biosynthesis</keyword>
<keyword id="KW-0057">Aromatic amino acid biosynthesis</keyword>
<keyword id="KW-0456">Lyase</keyword>
<keyword id="KW-0663">Pyridoxal phosphate</keyword>
<keyword id="KW-1185">Reference proteome</keyword>
<keyword id="KW-0822">Tryptophan biosynthesis</keyword>
<protein>
    <recommendedName>
        <fullName evidence="1">Tryptophan synthase beta chain</fullName>
        <ecNumber evidence="1">4.2.1.20</ecNumber>
    </recommendedName>
</protein>
<proteinExistence type="inferred from homology"/>
<accession>A2SHS4</accession>
<sequence>MLNYQQPDASGHFGRYGGSFVAETLIHALDELKAAYARYRDDPEFVAEFKSELAHFVGRPSPIYHAARMSRELGGAQIYLKREDLNHTGAHKINNTIGQALLARRMGKPRVIAETGAGQHGVATATICARYGMECVVYMGSEDVKRQSPNVYRMHLLGARVVPVDSGSKTLKDALNEALRDWVTNVENTFYIIGTVAGPAPYPEMVRDFQSVIGEECLRQMPEMAGRQPDAVIACVGGGSNAMGIFYPYIRHEGVRLIGVEAAGHGLDSGKHAASLSAGSPGVLHGNRTYLLQDANGQIIETHSISAGLDYPGVGPEHAYLKDIGRAEYVGITDDEALQAFHRLCRTEGIIPALESSHAVAYAMKLAPTMRSDQSLLVNLSGRGDKDIGTVADLSGAEFYDRPSSRGEKVKQ</sequence>
<gene>
    <name evidence="1" type="primary">trpB</name>
    <name type="ordered locus">Mpe_A2157</name>
</gene>
<dbReference type="EC" id="4.2.1.20" evidence="1"/>
<dbReference type="EMBL" id="CP000555">
    <property type="protein sequence ID" value="ABM95113.1"/>
    <property type="molecule type" value="Genomic_DNA"/>
</dbReference>
<dbReference type="RefSeq" id="WP_011829750.1">
    <property type="nucleotide sequence ID" value="NC_008825.1"/>
</dbReference>
<dbReference type="SMR" id="A2SHS4"/>
<dbReference type="STRING" id="420662.Mpe_A2157"/>
<dbReference type="KEGG" id="mpt:Mpe_A2157"/>
<dbReference type="eggNOG" id="COG0133">
    <property type="taxonomic scope" value="Bacteria"/>
</dbReference>
<dbReference type="HOGENOM" id="CLU_016734_3_1_4"/>
<dbReference type="UniPathway" id="UPA00035">
    <property type="reaction ID" value="UER00044"/>
</dbReference>
<dbReference type="Proteomes" id="UP000000366">
    <property type="component" value="Chromosome"/>
</dbReference>
<dbReference type="GO" id="GO:0005737">
    <property type="term" value="C:cytoplasm"/>
    <property type="evidence" value="ECO:0007669"/>
    <property type="project" value="TreeGrafter"/>
</dbReference>
<dbReference type="GO" id="GO:0004834">
    <property type="term" value="F:tryptophan synthase activity"/>
    <property type="evidence" value="ECO:0007669"/>
    <property type="project" value="UniProtKB-UniRule"/>
</dbReference>
<dbReference type="CDD" id="cd06446">
    <property type="entry name" value="Trp-synth_B"/>
    <property type="match status" value="1"/>
</dbReference>
<dbReference type="FunFam" id="3.40.50.1100:FF:000001">
    <property type="entry name" value="Tryptophan synthase beta chain"/>
    <property type="match status" value="1"/>
</dbReference>
<dbReference type="FunFam" id="3.40.50.1100:FF:000004">
    <property type="entry name" value="Tryptophan synthase beta chain"/>
    <property type="match status" value="1"/>
</dbReference>
<dbReference type="Gene3D" id="3.40.50.1100">
    <property type="match status" value="2"/>
</dbReference>
<dbReference type="HAMAP" id="MF_00133">
    <property type="entry name" value="Trp_synth_beta"/>
    <property type="match status" value="1"/>
</dbReference>
<dbReference type="InterPro" id="IPR006653">
    <property type="entry name" value="Trp_synth_b_CS"/>
</dbReference>
<dbReference type="InterPro" id="IPR006654">
    <property type="entry name" value="Trp_synth_beta"/>
</dbReference>
<dbReference type="InterPro" id="IPR023026">
    <property type="entry name" value="Trp_synth_beta/beta-like"/>
</dbReference>
<dbReference type="InterPro" id="IPR001926">
    <property type="entry name" value="TrpB-like_PALP"/>
</dbReference>
<dbReference type="InterPro" id="IPR036052">
    <property type="entry name" value="TrpB-like_PALP_sf"/>
</dbReference>
<dbReference type="NCBIfam" id="TIGR00263">
    <property type="entry name" value="trpB"/>
    <property type="match status" value="1"/>
</dbReference>
<dbReference type="PANTHER" id="PTHR48077:SF3">
    <property type="entry name" value="TRYPTOPHAN SYNTHASE"/>
    <property type="match status" value="1"/>
</dbReference>
<dbReference type="PANTHER" id="PTHR48077">
    <property type="entry name" value="TRYPTOPHAN SYNTHASE-RELATED"/>
    <property type="match status" value="1"/>
</dbReference>
<dbReference type="Pfam" id="PF00291">
    <property type="entry name" value="PALP"/>
    <property type="match status" value="1"/>
</dbReference>
<dbReference type="PIRSF" id="PIRSF001413">
    <property type="entry name" value="Trp_syn_beta"/>
    <property type="match status" value="1"/>
</dbReference>
<dbReference type="SUPFAM" id="SSF53686">
    <property type="entry name" value="Tryptophan synthase beta subunit-like PLP-dependent enzymes"/>
    <property type="match status" value="1"/>
</dbReference>
<dbReference type="PROSITE" id="PS00168">
    <property type="entry name" value="TRP_SYNTHASE_BETA"/>
    <property type="match status" value="1"/>
</dbReference>
<reference key="1">
    <citation type="journal article" date="2007" name="J. Bacteriol.">
        <title>Whole-genome analysis of the methyl tert-butyl ether-degrading beta-proteobacterium Methylibium petroleiphilum PM1.</title>
        <authorList>
            <person name="Kane S.R."/>
            <person name="Chakicherla A.Y."/>
            <person name="Chain P.S.G."/>
            <person name="Schmidt R."/>
            <person name="Shin M.W."/>
            <person name="Legler T.C."/>
            <person name="Scow K.M."/>
            <person name="Larimer F.W."/>
            <person name="Lucas S.M."/>
            <person name="Richardson P.M."/>
            <person name="Hristova K.R."/>
        </authorList>
    </citation>
    <scope>NUCLEOTIDE SEQUENCE [LARGE SCALE GENOMIC DNA]</scope>
    <source>
        <strain>ATCC BAA-1232 / LMG 22953 / PM1</strain>
    </source>
</reference>
<evidence type="ECO:0000255" key="1">
    <source>
        <dbReference type="HAMAP-Rule" id="MF_00133"/>
    </source>
</evidence>